<sequence>MSGETTRLTEPQLRELAARGAAELDGATATDMLRWTDETFGDIGGAGGGVSGHRGWTTCNYVVASNMADAVLVDLAAKVRPGVPVIFLDTGYHFVETIGTRDAIESVYDVRVLNVTPEHTVAEQDELLGKDLFARNPHECCRLRKVVPLGKTLRGYSAWVTGLRRVDAPTRANAPLVSFDETFKLVKVNPLAAWTDQDVQEYIADNDVLVNPLVREGYPSIGCAPCTAKPAEGADPRSGRWQGLAKTECGLHAS</sequence>
<proteinExistence type="inferred from homology"/>
<keyword id="KW-0963">Cytoplasm</keyword>
<keyword id="KW-0408">Iron</keyword>
<keyword id="KW-0411">Iron-sulfur</keyword>
<keyword id="KW-0479">Metal-binding</keyword>
<keyword id="KW-0560">Oxidoreductase</keyword>
<keyword id="KW-1185">Reference proteome</keyword>
<dbReference type="EC" id="1.8.4.10" evidence="1"/>
<dbReference type="EMBL" id="AE000516">
    <property type="protein sequence ID" value="AAK46757.1"/>
    <property type="molecule type" value="Genomic_DNA"/>
</dbReference>
<dbReference type="PIR" id="C70682">
    <property type="entry name" value="C70682"/>
</dbReference>
<dbReference type="RefSeq" id="WP_003412303.1">
    <property type="nucleotide sequence ID" value="NZ_KK341227.1"/>
</dbReference>
<dbReference type="SMR" id="P9WIK2"/>
<dbReference type="BindingDB" id="P9WIK2"/>
<dbReference type="KEGG" id="mtc:MT2462"/>
<dbReference type="PATRIC" id="fig|83331.31.peg.2652"/>
<dbReference type="HOGENOM" id="CLU_044089_2_0_11"/>
<dbReference type="Proteomes" id="UP000001020">
    <property type="component" value="Chromosome"/>
</dbReference>
<dbReference type="GO" id="GO:0005737">
    <property type="term" value="C:cytoplasm"/>
    <property type="evidence" value="ECO:0007669"/>
    <property type="project" value="UniProtKB-SubCell"/>
</dbReference>
<dbReference type="GO" id="GO:0051539">
    <property type="term" value="F:4 iron, 4 sulfur cluster binding"/>
    <property type="evidence" value="ECO:0007669"/>
    <property type="project" value="UniProtKB-UniRule"/>
</dbReference>
<dbReference type="GO" id="GO:0043866">
    <property type="term" value="F:adenylyl-sulfate reductase (thioredoxin) activity"/>
    <property type="evidence" value="ECO:0007669"/>
    <property type="project" value="UniProtKB-EC"/>
</dbReference>
<dbReference type="GO" id="GO:0046872">
    <property type="term" value="F:metal ion binding"/>
    <property type="evidence" value="ECO:0007669"/>
    <property type="project" value="UniProtKB-KW"/>
</dbReference>
<dbReference type="GO" id="GO:0004604">
    <property type="term" value="F:phosphoadenylyl-sulfate reductase (thioredoxin) activity"/>
    <property type="evidence" value="ECO:0007669"/>
    <property type="project" value="UniProtKB-UniRule"/>
</dbReference>
<dbReference type="GO" id="GO:0019344">
    <property type="term" value="P:cysteine biosynthetic process"/>
    <property type="evidence" value="ECO:0007669"/>
    <property type="project" value="InterPro"/>
</dbReference>
<dbReference type="GO" id="GO:0070814">
    <property type="term" value="P:hydrogen sulfide biosynthetic process"/>
    <property type="evidence" value="ECO:0007669"/>
    <property type="project" value="UniProtKB-UniRule"/>
</dbReference>
<dbReference type="GO" id="GO:0019379">
    <property type="term" value="P:sulfate assimilation, phosphoadenylyl sulfate reduction by phosphoadenylyl-sulfate reductase (thioredoxin)"/>
    <property type="evidence" value="ECO:0007669"/>
    <property type="project" value="UniProtKB-UniRule"/>
</dbReference>
<dbReference type="CDD" id="cd23945">
    <property type="entry name" value="PAPS_reductase"/>
    <property type="match status" value="1"/>
</dbReference>
<dbReference type="FunFam" id="3.40.50.620:FF:000136">
    <property type="entry name" value="Probable phosphoadenosine phosphosulfate reductase"/>
    <property type="match status" value="1"/>
</dbReference>
<dbReference type="Gene3D" id="3.40.50.620">
    <property type="entry name" value="HUPs"/>
    <property type="match status" value="1"/>
</dbReference>
<dbReference type="HAMAP" id="MF_00063">
    <property type="entry name" value="CysH"/>
    <property type="match status" value="1"/>
</dbReference>
<dbReference type="InterPro" id="IPR011798">
    <property type="entry name" value="APS_reductase"/>
</dbReference>
<dbReference type="InterPro" id="IPR004511">
    <property type="entry name" value="PAPS/APS_Rdtase"/>
</dbReference>
<dbReference type="InterPro" id="IPR002500">
    <property type="entry name" value="PAPS_reduct_dom"/>
</dbReference>
<dbReference type="InterPro" id="IPR014729">
    <property type="entry name" value="Rossmann-like_a/b/a_fold"/>
</dbReference>
<dbReference type="NCBIfam" id="TIGR02055">
    <property type="entry name" value="APS_reductase"/>
    <property type="match status" value="1"/>
</dbReference>
<dbReference type="NCBIfam" id="TIGR00434">
    <property type="entry name" value="cysH"/>
    <property type="match status" value="1"/>
</dbReference>
<dbReference type="NCBIfam" id="NF002537">
    <property type="entry name" value="PRK02090.1"/>
    <property type="match status" value="1"/>
</dbReference>
<dbReference type="PANTHER" id="PTHR46509">
    <property type="entry name" value="PHOSPHOADENOSINE PHOSPHOSULFATE REDUCTASE"/>
    <property type="match status" value="1"/>
</dbReference>
<dbReference type="PANTHER" id="PTHR46509:SF1">
    <property type="entry name" value="PHOSPHOADENOSINE PHOSPHOSULFATE REDUCTASE"/>
    <property type="match status" value="1"/>
</dbReference>
<dbReference type="Pfam" id="PF01507">
    <property type="entry name" value="PAPS_reduct"/>
    <property type="match status" value="1"/>
</dbReference>
<dbReference type="PIRSF" id="PIRSF000857">
    <property type="entry name" value="PAPS_reductase"/>
    <property type="match status" value="1"/>
</dbReference>
<dbReference type="SUPFAM" id="SSF52402">
    <property type="entry name" value="Adenine nucleotide alpha hydrolases-like"/>
    <property type="match status" value="1"/>
</dbReference>
<reference key="1">
    <citation type="journal article" date="2002" name="J. Bacteriol.">
        <title>Whole-genome comparison of Mycobacterium tuberculosis clinical and laboratory strains.</title>
        <authorList>
            <person name="Fleischmann R.D."/>
            <person name="Alland D."/>
            <person name="Eisen J.A."/>
            <person name="Carpenter L."/>
            <person name="White O."/>
            <person name="Peterson J.D."/>
            <person name="DeBoy R.T."/>
            <person name="Dodson R.J."/>
            <person name="Gwinn M.L."/>
            <person name="Haft D.H."/>
            <person name="Hickey E.K."/>
            <person name="Kolonay J.F."/>
            <person name="Nelson W.C."/>
            <person name="Umayam L.A."/>
            <person name="Ermolaeva M.D."/>
            <person name="Salzberg S.L."/>
            <person name="Delcher A."/>
            <person name="Utterback T.R."/>
            <person name="Weidman J.F."/>
            <person name="Khouri H.M."/>
            <person name="Gill J."/>
            <person name="Mikula A."/>
            <person name="Bishai W."/>
            <person name="Jacobs W.R. Jr."/>
            <person name="Venter J.C."/>
            <person name="Fraser C.M."/>
        </authorList>
    </citation>
    <scope>NUCLEOTIDE SEQUENCE [LARGE SCALE GENOMIC DNA]</scope>
    <source>
        <strain>CDC 1551 / Oshkosh</strain>
    </source>
</reference>
<gene>
    <name evidence="1" type="primary">cysH</name>
    <name type="ordered locus">MT2462</name>
</gene>
<protein>
    <recommendedName>
        <fullName evidence="1">Adenosine 5'-phosphosulfate reductase</fullName>
        <shortName evidence="1">APS reductase</shortName>
        <ecNumber evidence="1">1.8.4.10</ecNumber>
    </recommendedName>
    <alternativeName>
        <fullName evidence="1">5'-adenylylsulfate reductase</fullName>
    </alternativeName>
    <alternativeName>
        <fullName evidence="1">Thioredoxin-dependent 5'-adenylylsulfate reductase</fullName>
    </alternativeName>
</protein>
<accession>P9WIK2</accession>
<accession>L0T9P0</accession>
<accession>P65668</accession>
<accession>P71752</accession>
<comment type="function">
    <text evidence="1">Catalyzes the formation of sulfite from adenosine 5'-phosphosulfate (APS) using thioredoxin as an electron donor.</text>
</comment>
<comment type="catalytic activity">
    <reaction evidence="1">
        <text>[thioredoxin]-disulfide + sulfite + AMP + 2 H(+) = adenosine 5'-phosphosulfate + [thioredoxin]-dithiol</text>
        <dbReference type="Rhea" id="RHEA:21976"/>
        <dbReference type="Rhea" id="RHEA-COMP:10698"/>
        <dbReference type="Rhea" id="RHEA-COMP:10700"/>
        <dbReference type="ChEBI" id="CHEBI:15378"/>
        <dbReference type="ChEBI" id="CHEBI:17359"/>
        <dbReference type="ChEBI" id="CHEBI:29950"/>
        <dbReference type="ChEBI" id="CHEBI:50058"/>
        <dbReference type="ChEBI" id="CHEBI:58243"/>
        <dbReference type="ChEBI" id="CHEBI:456215"/>
        <dbReference type="EC" id="1.8.4.10"/>
    </reaction>
</comment>
<comment type="cofactor">
    <cofactor evidence="1">
        <name>[4Fe-4S] cluster</name>
        <dbReference type="ChEBI" id="CHEBI:49883"/>
    </cofactor>
    <text evidence="1">Binds 1 [4Fe-4S] cluster per subunit.</text>
</comment>
<comment type="pathway">
    <text evidence="1">Sulfur metabolism; hydrogen sulfide biosynthesis; sulfite from sulfate.</text>
</comment>
<comment type="subcellular location">
    <subcellularLocation>
        <location evidence="1">Cytoplasm</location>
    </subcellularLocation>
</comment>
<comment type="similarity">
    <text evidence="1 2">Belongs to the PAPS reductase family. CysH subfamily.</text>
</comment>
<organism>
    <name type="scientific">Mycobacterium tuberculosis (strain CDC 1551 / Oshkosh)</name>
    <dbReference type="NCBI Taxonomy" id="83331"/>
    <lineage>
        <taxon>Bacteria</taxon>
        <taxon>Bacillati</taxon>
        <taxon>Actinomycetota</taxon>
        <taxon>Actinomycetes</taxon>
        <taxon>Mycobacteriales</taxon>
        <taxon>Mycobacteriaceae</taxon>
        <taxon>Mycobacterium</taxon>
        <taxon>Mycobacterium tuberculosis complex</taxon>
    </lineage>
</organism>
<evidence type="ECO:0000255" key="1">
    <source>
        <dbReference type="HAMAP-Rule" id="MF_00063"/>
    </source>
</evidence>
<evidence type="ECO:0000305" key="2"/>
<feature type="chain" id="PRO_0000427992" description="Adenosine 5'-phosphosulfate reductase">
    <location>
        <begin position="1"/>
        <end position="254"/>
    </location>
</feature>
<feature type="active site" description="Nucleophile; cysteine thiosulfonate intermediate" evidence="1">
    <location>
        <position position="249"/>
    </location>
</feature>
<feature type="binding site" evidence="1">
    <location>
        <position position="140"/>
    </location>
    <ligand>
        <name>[4Fe-4S] cluster</name>
        <dbReference type="ChEBI" id="CHEBI:49883"/>
    </ligand>
</feature>
<feature type="binding site" evidence="1">
    <location>
        <position position="141"/>
    </location>
    <ligand>
        <name>[4Fe-4S] cluster</name>
        <dbReference type="ChEBI" id="CHEBI:49883"/>
    </ligand>
</feature>
<feature type="binding site" evidence="1">
    <location>
        <position position="223"/>
    </location>
    <ligand>
        <name>[4Fe-4S] cluster</name>
        <dbReference type="ChEBI" id="CHEBI:49883"/>
    </ligand>
</feature>
<feature type="binding site" evidence="1">
    <location>
        <position position="226"/>
    </location>
    <ligand>
        <name>[4Fe-4S] cluster</name>
        <dbReference type="ChEBI" id="CHEBI:49883"/>
    </ligand>
</feature>
<name>CYSH_MYCTO</name>